<keyword id="KW-0067">ATP-binding</keyword>
<keyword id="KW-0414">Isoprene biosynthesis</keyword>
<keyword id="KW-0418">Kinase</keyword>
<keyword id="KW-0547">Nucleotide-binding</keyword>
<keyword id="KW-1185">Reference proteome</keyword>
<keyword id="KW-0808">Transferase</keyword>
<proteinExistence type="inferred from homology"/>
<name>ISPE_ECO55</name>
<evidence type="ECO:0000255" key="1">
    <source>
        <dbReference type="HAMAP-Rule" id="MF_00061"/>
    </source>
</evidence>
<protein>
    <recommendedName>
        <fullName evidence="1">4-diphosphocytidyl-2-C-methyl-D-erythritol kinase</fullName>
        <shortName evidence="1">CMK</shortName>
        <ecNumber evidence="1">2.7.1.148</ecNumber>
    </recommendedName>
    <alternativeName>
        <fullName evidence="1">4-(cytidine-5'-diphospho)-2-C-methyl-D-erythritol kinase</fullName>
    </alternativeName>
</protein>
<dbReference type="EC" id="2.7.1.148" evidence="1"/>
<dbReference type="EMBL" id="CU928145">
    <property type="protein sequence ID" value="CAU97162.1"/>
    <property type="molecule type" value="Genomic_DNA"/>
</dbReference>
<dbReference type="RefSeq" id="WP_001260315.1">
    <property type="nucleotide sequence ID" value="NC_011748.1"/>
</dbReference>
<dbReference type="SMR" id="B7LGW9"/>
<dbReference type="KEGG" id="eck:EC55989_1304"/>
<dbReference type="HOGENOM" id="CLU_053057_3_0_6"/>
<dbReference type="UniPathway" id="UPA00056">
    <property type="reaction ID" value="UER00094"/>
</dbReference>
<dbReference type="Proteomes" id="UP000000746">
    <property type="component" value="Chromosome"/>
</dbReference>
<dbReference type="GO" id="GO:0050515">
    <property type="term" value="F:4-(cytidine 5'-diphospho)-2-C-methyl-D-erythritol kinase activity"/>
    <property type="evidence" value="ECO:0007669"/>
    <property type="project" value="UniProtKB-UniRule"/>
</dbReference>
<dbReference type="GO" id="GO:0005524">
    <property type="term" value="F:ATP binding"/>
    <property type="evidence" value="ECO:0007669"/>
    <property type="project" value="UniProtKB-UniRule"/>
</dbReference>
<dbReference type="GO" id="GO:0019288">
    <property type="term" value="P:isopentenyl diphosphate biosynthetic process, methylerythritol 4-phosphate pathway"/>
    <property type="evidence" value="ECO:0007669"/>
    <property type="project" value="UniProtKB-UniRule"/>
</dbReference>
<dbReference type="GO" id="GO:0016114">
    <property type="term" value="P:terpenoid biosynthetic process"/>
    <property type="evidence" value="ECO:0007669"/>
    <property type="project" value="InterPro"/>
</dbReference>
<dbReference type="FunFam" id="3.30.230.10:FF:000022">
    <property type="entry name" value="4-diphosphocytidyl-2-C-methyl-D-erythritol kinase"/>
    <property type="match status" value="1"/>
</dbReference>
<dbReference type="FunFam" id="3.30.70.890:FF:000004">
    <property type="entry name" value="4-diphosphocytidyl-2-C-methyl-D-erythritol kinase"/>
    <property type="match status" value="1"/>
</dbReference>
<dbReference type="Gene3D" id="3.30.230.10">
    <property type="match status" value="1"/>
</dbReference>
<dbReference type="Gene3D" id="3.30.70.890">
    <property type="entry name" value="GHMP kinase, C-terminal domain"/>
    <property type="match status" value="1"/>
</dbReference>
<dbReference type="HAMAP" id="MF_00061">
    <property type="entry name" value="IspE"/>
    <property type="match status" value="1"/>
</dbReference>
<dbReference type="InterPro" id="IPR013750">
    <property type="entry name" value="GHMP_kinase_C_dom"/>
</dbReference>
<dbReference type="InterPro" id="IPR036554">
    <property type="entry name" value="GHMP_kinase_C_sf"/>
</dbReference>
<dbReference type="InterPro" id="IPR006204">
    <property type="entry name" value="GHMP_kinase_N_dom"/>
</dbReference>
<dbReference type="InterPro" id="IPR004424">
    <property type="entry name" value="IspE"/>
</dbReference>
<dbReference type="InterPro" id="IPR020568">
    <property type="entry name" value="Ribosomal_Su5_D2-typ_SF"/>
</dbReference>
<dbReference type="InterPro" id="IPR014721">
    <property type="entry name" value="Ribsml_uS5_D2-typ_fold_subgr"/>
</dbReference>
<dbReference type="NCBIfam" id="TIGR00154">
    <property type="entry name" value="ispE"/>
    <property type="match status" value="1"/>
</dbReference>
<dbReference type="PANTHER" id="PTHR43527">
    <property type="entry name" value="4-DIPHOSPHOCYTIDYL-2-C-METHYL-D-ERYTHRITOL KINASE, CHLOROPLASTIC"/>
    <property type="match status" value="1"/>
</dbReference>
<dbReference type="PANTHER" id="PTHR43527:SF2">
    <property type="entry name" value="4-DIPHOSPHOCYTIDYL-2-C-METHYL-D-ERYTHRITOL KINASE, CHLOROPLASTIC"/>
    <property type="match status" value="1"/>
</dbReference>
<dbReference type="Pfam" id="PF08544">
    <property type="entry name" value="GHMP_kinases_C"/>
    <property type="match status" value="1"/>
</dbReference>
<dbReference type="Pfam" id="PF00288">
    <property type="entry name" value="GHMP_kinases_N"/>
    <property type="match status" value="1"/>
</dbReference>
<dbReference type="PIRSF" id="PIRSF010376">
    <property type="entry name" value="IspE"/>
    <property type="match status" value="1"/>
</dbReference>
<dbReference type="SUPFAM" id="SSF55060">
    <property type="entry name" value="GHMP Kinase, C-terminal domain"/>
    <property type="match status" value="1"/>
</dbReference>
<dbReference type="SUPFAM" id="SSF54211">
    <property type="entry name" value="Ribosomal protein S5 domain 2-like"/>
    <property type="match status" value="1"/>
</dbReference>
<sequence length="283" mass="30961">MRTQWPSPAKLNLFLYITGQRADGYHTLQTLFQFLDYGDTISIELRDDGDIRLLTPVEGVEHEDNLIVRAARLLIKTAADSGRLPTGSGANISIDKRLPMGGGLGGGSSNAATVLVALNYLWQCGLSMDELAEMGLTLGADVPVFVRGHAAFAEGVGEILTPVDPPEKWYLVAHPGVSIPTPVIFKDPELPRNTPKRSIETLLKCEFSNDCEVIARKRFREVDAVLSWLLEYAPSRLTGTGACVFAEFDTESEARQVLEQAPEWLNGFVAKGVNLSPLHRAML</sequence>
<accession>B7LGW9</accession>
<organism>
    <name type="scientific">Escherichia coli (strain 55989 / EAEC)</name>
    <dbReference type="NCBI Taxonomy" id="585055"/>
    <lineage>
        <taxon>Bacteria</taxon>
        <taxon>Pseudomonadati</taxon>
        <taxon>Pseudomonadota</taxon>
        <taxon>Gammaproteobacteria</taxon>
        <taxon>Enterobacterales</taxon>
        <taxon>Enterobacteriaceae</taxon>
        <taxon>Escherichia</taxon>
    </lineage>
</organism>
<gene>
    <name evidence="1" type="primary">ispE</name>
    <name type="ordered locus">EC55989_1304</name>
</gene>
<feature type="chain" id="PRO_1000190686" description="4-diphosphocytidyl-2-C-methyl-D-erythritol kinase">
    <location>
        <begin position="1"/>
        <end position="283"/>
    </location>
</feature>
<feature type="active site" evidence="1">
    <location>
        <position position="10"/>
    </location>
</feature>
<feature type="active site" evidence="1">
    <location>
        <position position="141"/>
    </location>
</feature>
<feature type="binding site" evidence="1">
    <location>
        <begin position="99"/>
        <end position="109"/>
    </location>
    <ligand>
        <name>ATP</name>
        <dbReference type="ChEBI" id="CHEBI:30616"/>
    </ligand>
</feature>
<comment type="function">
    <text evidence="1">Catalyzes the phosphorylation of the position 2 hydroxy group of 4-diphosphocytidyl-2C-methyl-D-erythritol.</text>
</comment>
<comment type="catalytic activity">
    <reaction evidence="1">
        <text>4-CDP-2-C-methyl-D-erythritol + ATP = 4-CDP-2-C-methyl-D-erythritol 2-phosphate + ADP + H(+)</text>
        <dbReference type="Rhea" id="RHEA:18437"/>
        <dbReference type="ChEBI" id="CHEBI:15378"/>
        <dbReference type="ChEBI" id="CHEBI:30616"/>
        <dbReference type="ChEBI" id="CHEBI:57823"/>
        <dbReference type="ChEBI" id="CHEBI:57919"/>
        <dbReference type="ChEBI" id="CHEBI:456216"/>
        <dbReference type="EC" id="2.7.1.148"/>
    </reaction>
</comment>
<comment type="pathway">
    <text evidence="1">Isoprenoid biosynthesis; isopentenyl diphosphate biosynthesis via DXP pathway; isopentenyl diphosphate from 1-deoxy-D-xylulose 5-phosphate: step 3/6.</text>
</comment>
<comment type="subunit">
    <text evidence="1">Homodimer.</text>
</comment>
<comment type="similarity">
    <text evidence="1">Belongs to the GHMP kinase family. IspE subfamily.</text>
</comment>
<reference key="1">
    <citation type="journal article" date="2009" name="PLoS Genet.">
        <title>Organised genome dynamics in the Escherichia coli species results in highly diverse adaptive paths.</title>
        <authorList>
            <person name="Touchon M."/>
            <person name="Hoede C."/>
            <person name="Tenaillon O."/>
            <person name="Barbe V."/>
            <person name="Baeriswyl S."/>
            <person name="Bidet P."/>
            <person name="Bingen E."/>
            <person name="Bonacorsi S."/>
            <person name="Bouchier C."/>
            <person name="Bouvet O."/>
            <person name="Calteau A."/>
            <person name="Chiapello H."/>
            <person name="Clermont O."/>
            <person name="Cruveiller S."/>
            <person name="Danchin A."/>
            <person name="Diard M."/>
            <person name="Dossat C."/>
            <person name="Karoui M.E."/>
            <person name="Frapy E."/>
            <person name="Garry L."/>
            <person name="Ghigo J.M."/>
            <person name="Gilles A.M."/>
            <person name="Johnson J."/>
            <person name="Le Bouguenec C."/>
            <person name="Lescat M."/>
            <person name="Mangenot S."/>
            <person name="Martinez-Jehanne V."/>
            <person name="Matic I."/>
            <person name="Nassif X."/>
            <person name="Oztas S."/>
            <person name="Petit M.A."/>
            <person name="Pichon C."/>
            <person name="Rouy Z."/>
            <person name="Ruf C.S."/>
            <person name="Schneider D."/>
            <person name="Tourret J."/>
            <person name="Vacherie B."/>
            <person name="Vallenet D."/>
            <person name="Medigue C."/>
            <person name="Rocha E.P.C."/>
            <person name="Denamur E."/>
        </authorList>
    </citation>
    <scope>NUCLEOTIDE SEQUENCE [LARGE SCALE GENOMIC DNA]</scope>
    <source>
        <strain>55989 / EAEC</strain>
    </source>
</reference>